<sequence length="156" mass="18033">MASYFDEHDCEPTNPEEQYRQNALLELARSLMQGLDIDSGSFDLSDWDQRLPPPAAKAVVQSLPVVIISPEQADKGVKCPVCLLEFEEQESVREMPCKHLFHTGCILPWLNKTNSCPLCRLELPTDNADYEEFKKDKERRRQREHRLEDLHGAMYT</sequence>
<comment type="function">
    <text evidence="1">E3 ubiquitin-protein ligase which accepts ubiquitin from an E2 ubiquitin-conjugating enzyme in the form of a thioester and then directly transfers the ubiquitin to targeted substrates. Catalyzes monoubiquitination of 26S proteasome subunit PSMC2/RPT1.</text>
</comment>
<comment type="catalytic activity">
    <reaction evidence="1">
        <text>S-ubiquitinyl-[E2 ubiquitin-conjugating enzyme]-L-cysteine + [acceptor protein]-L-lysine = [E2 ubiquitin-conjugating enzyme]-L-cysteine + N(6)-ubiquitinyl-[acceptor protein]-L-lysine.</text>
        <dbReference type="EC" id="2.3.2.27"/>
    </reaction>
</comment>
<comment type="pathway">
    <text evidence="1">Protein modification; protein ubiquitination.</text>
</comment>
<comment type="alternative products">
    <event type="alternative splicing"/>
    <isoform>
        <id>Q7ZW78-1</id>
        <name>1</name>
        <sequence type="displayed"/>
    </isoform>
    <isoform>
        <id>Q7ZW78-2</id>
        <name>2</name>
        <sequence type="described" ref="VSP_036585"/>
    </isoform>
</comment>
<comment type="similarity">
    <text evidence="6">Belongs to the RNF181 family.</text>
</comment>
<organism>
    <name type="scientific">Danio rerio</name>
    <name type="common">Zebrafish</name>
    <name type="synonym">Brachydanio rerio</name>
    <dbReference type="NCBI Taxonomy" id="7955"/>
    <lineage>
        <taxon>Eukaryota</taxon>
        <taxon>Metazoa</taxon>
        <taxon>Chordata</taxon>
        <taxon>Craniata</taxon>
        <taxon>Vertebrata</taxon>
        <taxon>Euteleostomi</taxon>
        <taxon>Actinopterygii</taxon>
        <taxon>Neopterygii</taxon>
        <taxon>Teleostei</taxon>
        <taxon>Ostariophysi</taxon>
        <taxon>Cypriniformes</taxon>
        <taxon>Danionidae</taxon>
        <taxon>Danioninae</taxon>
        <taxon>Danio</taxon>
    </lineage>
</organism>
<feature type="chain" id="PRO_0000295699" description="E3 ubiquitin-protein ligase RNF181">
    <location>
        <begin position="1"/>
        <end position="156"/>
    </location>
</feature>
<feature type="zinc finger region" description="RING-type; atypical" evidence="2">
    <location>
        <begin position="79"/>
        <end position="120"/>
    </location>
</feature>
<feature type="region of interest" description="Disordered" evidence="3">
    <location>
        <begin position="135"/>
        <end position="156"/>
    </location>
</feature>
<feature type="splice variant" id="VSP_036585" description="In isoform 2." evidence="6">
    <location>
        <begin position="112"/>
        <end position="136"/>
    </location>
</feature>
<feature type="sequence conflict" description="In Ref. 2; AAH50161." evidence="6" ref="2">
    <original>E</original>
    <variation>G</variation>
    <location>
        <position position="17"/>
    </location>
</feature>
<accession>Q7ZW78</accession>
<accession>B0V3A5</accession>
<accession>B0V3A6</accession>
<dbReference type="EC" id="2.3.2.27" evidence="1"/>
<dbReference type="EMBL" id="CU041374">
    <property type="status" value="NOT_ANNOTATED_CDS"/>
    <property type="molecule type" value="Genomic_DNA"/>
</dbReference>
<dbReference type="EMBL" id="BC050161">
    <property type="protein sequence ID" value="AAH50161.1"/>
    <property type="molecule type" value="mRNA"/>
</dbReference>
<dbReference type="RefSeq" id="NP_956600.1">
    <property type="nucleotide sequence ID" value="NM_200306.1"/>
</dbReference>
<dbReference type="SMR" id="Q7ZW78"/>
<dbReference type="FunCoup" id="Q7ZW78">
    <property type="interactions" value="425"/>
</dbReference>
<dbReference type="STRING" id="7955.ENSDARP00000038991"/>
<dbReference type="PaxDb" id="7955-ENSDARP00000038991"/>
<dbReference type="Ensembl" id="ENSDART00000029450">
    <molecule id="Q7ZW78-1"/>
    <property type="protein sequence ID" value="ENSDARP00000038991"/>
    <property type="gene ID" value="ENSDARG00000023958"/>
</dbReference>
<dbReference type="Ensembl" id="ENSDART00000140392">
    <molecule id="Q7ZW78-1"/>
    <property type="protein sequence ID" value="ENSDARP00000123250"/>
    <property type="gene ID" value="ENSDARG00000023958"/>
</dbReference>
<dbReference type="GeneID" id="393276"/>
<dbReference type="KEGG" id="dre:393276"/>
<dbReference type="AGR" id="ZFIN:ZDB-GENE-040426-1024"/>
<dbReference type="CTD" id="51255"/>
<dbReference type="ZFIN" id="ZDB-GENE-040426-1024">
    <property type="gene designation" value="rnf181"/>
</dbReference>
<dbReference type="eggNOG" id="KOG0800">
    <property type="taxonomic scope" value="Eukaryota"/>
</dbReference>
<dbReference type="HOGENOM" id="CLU_144247_0_0_1"/>
<dbReference type="InParanoid" id="Q7ZW78"/>
<dbReference type="OMA" id="EHLHGAM"/>
<dbReference type="OrthoDB" id="21204at2759"/>
<dbReference type="PhylomeDB" id="Q7ZW78"/>
<dbReference type="UniPathway" id="UPA00143"/>
<dbReference type="PRO" id="PR:Q7ZW78"/>
<dbReference type="Proteomes" id="UP000000437">
    <property type="component" value="Chromosome 5"/>
</dbReference>
<dbReference type="Bgee" id="ENSDARG00000023958">
    <property type="expression patterns" value="Expressed in granulocyte and 27 other cell types or tissues"/>
</dbReference>
<dbReference type="GO" id="GO:0005737">
    <property type="term" value="C:cytoplasm"/>
    <property type="evidence" value="ECO:0000318"/>
    <property type="project" value="GO_Central"/>
</dbReference>
<dbReference type="GO" id="GO:0061630">
    <property type="term" value="F:ubiquitin protein ligase activity"/>
    <property type="evidence" value="ECO:0000250"/>
    <property type="project" value="UniProtKB"/>
</dbReference>
<dbReference type="GO" id="GO:0008270">
    <property type="term" value="F:zinc ion binding"/>
    <property type="evidence" value="ECO:0007669"/>
    <property type="project" value="UniProtKB-KW"/>
</dbReference>
<dbReference type="GO" id="GO:0016567">
    <property type="term" value="P:protein ubiquitination"/>
    <property type="evidence" value="ECO:0000318"/>
    <property type="project" value="GO_Central"/>
</dbReference>
<dbReference type="CDD" id="cd16669">
    <property type="entry name" value="RING-H2_RNF181"/>
    <property type="match status" value="1"/>
</dbReference>
<dbReference type="FunFam" id="3.30.40.10:FF:000127">
    <property type="entry name" value="E3 ubiquitin-protein ligase RNF181"/>
    <property type="match status" value="1"/>
</dbReference>
<dbReference type="Gene3D" id="3.30.40.10">
    <property type="entry name" value="Zinc/RING finger domain, C3HC4 (zinc finger)"/>
    <property type="match status" value="1"/>
</dbReference>
<dbReference type="InterPro" id="IPR001841">
    <property type="entry name" value="Znf_RING"/>
</dbReference>
<dbReference type="InterPro" id="IPR013083">
    <property type="entry name" value="Znf_RING/FYVE/PHD"/>
</dbReference>
<dbReference type="PANTHER" id="PTHR15710">
    <property type="entry name" value="E3 UBIQUITIN-PROTEIN LIGASE PRAJA"/>
    <property type="match status" value="1"/>
</dbReference>
<dbReference type="PANTHER" id="PTHR15710:SF160">
    <property type="entry name" value="E3 UBIQUITIN-PROTEIN LIGASE RNF181"/>
    <property type="match status" value="1"/>
</dbReference>
<dbReference type="Pfam" id="PF13639">
    <property type="entry name" value="zf-RING_2"/>
    <property type="match status" value="1"/>
</dbReference>
<dbReference type="SMART" id="SM00184">
    <property type="entry name" value="RING"/>
    <property type="match status" value="1"/>
</dbReference>
<dbReference type="SUPFAM" id="SSF57850">
    <property type="entry name" value="RING/U-box"/>
    <property type="match status" value="1"/>
</dbReference>
<dbReference type="PROSITE" id="PS50089">
    <property type="entry name" value="ZF_RING_2"/>
    <property type="match status" value="1"/>
</dbReference>
<evidence type="ECO:0000250" key="1">
    <source>
        <dbReference type="UniProtKB" id="Q9P0P0"/>
    </source>
</evidence>
<evidence type="ECO:0000255" key="2">
    <source>
        <dbReference type="PROSITE-ProRule" id="PRU00175"/>
    </source>
</evidence>
<evidence type="ECO:0000256" key="3">
    <source>
        <dbReference type="SAM" id="MobiDB-lite"/>
    </source>
</evidence>
<evidence type="ECO:0000303" key="4">
    <source>
    </source>
</evidence>
<evidence type="ECO:0000303" key="5">
    <source ref="2"/>
</evidence>
<evidence type="ECO:0000305" key="6"/>
<proteinExistence type="evidence at transcript level"/>
<protein>
    <recommendedName>
        <fullName evidence="6">E3 ubiquitin-protein ligase RNF181</fullName>
        <ecNumber evidence="1">2.3.2.27</ecNumber>
    </recommendedName>
    <alternativeName>
        <fullName>RING finger protein 181</fullName>
    </alternativeName>
</protein>
<keyword id="KW-0025">Alternative splicing</keyword>
<keyword id="KW-0479">Metal-binding</keyword>
<keyword id="KW-1185">Reference proteome</keyword>
<keyword id="KW-0808">Transferase</keyword>
<keyword id="KW-0833">Ubl conjugation pathway</keyword>
<keyword id="KW-0862">Zinc</keyword>
<keyword id="KW-0863">Zinc-finger</keyword>
<name>RN181_DANRE</name>
<reference key="1">
    <citation type="journal article" date="2013" name="Nature">
        <title>The zebrafish reference genome sequence and its relationship to the human genome.</title>
        <authorList>
            <person name="Howe K."/>
            <person name="Clark M.D."/>
            <person name="Torroja C.F."/>
            <person name="Torrance J."/>
            <person name="Berthelot C."/>
            <person name="Muffato M."/>
            <person name="Collins J.E."/>
            <person name="Humphray S."/>
            <person name="McLaren K."/>
            <person name="Matthews L."/>
            <person name="McLaren S."/>
            <person name="Sealy I."/>
            <person name="Caccamo M."/>
            <person name="Churcher C."/>
            <person name="Scott C."/>
            <person name="Barrett J.C."/>
            <person name="Koch R."/>
            <person name="Rauch G.J."/>
            <person name="White S."/>
            <person name="Chow W."/>
            <person name="Kilian B."/>
            <person name="Quintais L.T."/>
            <person name="Guerra-Assuncao J.A."/>
            <person name="Zhou Y."/>
            <person name="Gu Y."/>
            <person name="Yen J."/>
            <person name="Vogel J.H."/>
            <person name="Eyre T."/>
            <person name="Redmond S."/>
            <person name="Banerjee R."/>
            <person name="Chi J."/>
            <person name="Fu B."/>
            <person name="Langley E."/>
            <person name="Maguire S.F."/>
            <person name="Laird G.K."/>
            <person name="Lloyd D."/>
            <person name="Kenyon E."/>
            <person name="Donaldson S."/>
            <person name="Sehra H."/>
            <person name="Almeida-King J."/>
            <person name="Loveland J."/>
            <person name="Trevanion S."/>
            <person name="Jones M."/>
            <person name="Quail M."/>
            <person name="Willey D."/>
            <person name="Hunt A."/>
            <person name="Burton J."/>
            <person name="Sims S."/>
            <person name="McLay K."/>
            <person name="Plumb B."/>
            <person name="Davis J."/>
            <person name="Clee C."/>
            <person name="Oliver K."/>
            <person name="Clark R."/>
            <person name="Riddle C."/>
            <person name="Elliot D."/>
            <person name="Threadgold G."/>
            <person name="Harden G."/>
            <person name="Ware D."/>
            <person name="Begum S."/>
            <person name="Mortimore B."/>
            <person name="Kerry G."/>
            <person name="Heath P."/>
            <person name="Phillimore B."/>
            <person name="Tracey A."/>
            <person name="Corby N."/>
            <person name="Dunn M."/>
            <person name="Johnson C."/>
            <person name="Wood J."/>
            <person name="Clark S."/>
            <person name="Pelan S."/>
            <person name="Griffiths G."/>
            <person name="Smith M."/>
            <person name="Glithero R."/>
            <person name="Howden P."/>
            <person name="Barker N."/>
            <person name="Lloyd C."/>
            <person name="Stevens C."/>
            <person name="Harley J."/>
            <person name="Holt K."/>
            <person name="Panagiotidis G."/>
            <person name="Lovell J."/>
            <person name="Beasley H."/>
            <person name="Henderson C."/>
            <person name="Gordon D."/>
            <person name="Auger K."/>
            <person name="Wright D."/>
            <person name="Collins J."/>
            <person name="Raisen C."/>
            <person name="Dyer L."/>
            <person name="Leung K."/>
            <person name="Robertson L."/>
            <person name="Ambridge K."/>
            <person name="Leongamornlert D."/>
            <person name="McGuire S."/>
            <person name="Gilderthorp R."/>
            <person name="Griffiths C."/>
            <person name="Manthravadi D."/>
            <person name="Nichol S."/>
            <person name="Barker G."/>
            <person name="Whitehead S."/>
            <person name="Kay M."/>
            <person name="Brown J."/>
            <person name="Murnane C."/>
            <person name="Gray E."/>
            <person name="Humphries M."/>
            <person name="Sycamore N."/>
            <person name="Barker D."/>
            <person name="Saunders D."/>
            <person name="Wallis J."/>
            <person name="Babbage A."/>
            <person name="Hammond S."/>
            <person name="Mashreghi-Mohammadi M."/>
            <person name="Barr L."/>
            <person name="Martin S."/>
            <person name="Wray P."/>
            <person name="Ellington A."/>
            <person name="Matthews N."/>
            <person name="Ellwood M."/>
            <person name="Woodmansey R."/>
            <person name="Clark G."/>
            <person name="Cooper J."/>
            <person name="Tromans A."/>
            <person name="Grafham D."/>
            <person name="Skuce C."/>
            <person name="Pandian R."/>
            <person name="Andrews R."/>
            <person name="Harrison E."/>
            <person name="Kimberley A."/>
            <person name="Garnett J."/>
            <person name="Fosker N."/>
            <person name="Hall R."/>
            <person name="Garner P."/>
            <person name="Kelly D."/>
            <person name="Bird C."/>
            <person name="Palmer S."/>
            <person name="Gehring I."/>
            <person name="Berger A."/>
            <person name="Dooley C.M."/>
            <person name="Ersan-Urun Z."/>
            <person name="Eser C."/>
            <person name="Geiger H."/>
            <person name="Geisler M."/>
            <person name="Karotki L."/>
            <person name="Kirn A."/>
            <person name="Konantz J."/>
            <person name="Konantz M."/>
            <person name="Oberlander M."/>
            <person name="Rudolph-Geiger S."/>
            <person name="Teucke M."/>
            <person name="Lanz C."/>
            <person name="Raddatz G."/>
            <person name="Osoegawa K."/>
            <person name="Zhu B."/>
            <person name="Rapp A."/>
            <person name="Widaa S."/>
            <person name="Langford C."/>
            <person name="Yang F."/>
            <person name="Schuster S.C."/>
            <person name="Carter N.P."/>
            <person name="Harrow J."/>
            <person name="Ning Z."/>
            <person name="Herrero J."/>
            <person name="Searle S.M."/>
            <person name="Enright A."/>
            <person name="Geisler R."/>
            <person name="Plasterk R.H."/>
            <person name="Lee C."/>
            <person name="Westerfield M."/>
            <person name="de Jong P.J."/>
            <person name="Zon L.I."/>
            <person name="Postlethwait J.H."/>
            <person name="Nusslein-Volhard C."/>
            <person name="Hubbard T.J."/>
            <person name="Roest Crollius H."/>
            <person name="Rogers J."/>
            <person name="Stemple D.L."/>
        </authorList>
    </citation>
    <scope>NUCLEOTIDE SEQUENCE [LARGE SCALE GENOMIC DNA]</scope>
    <source>
        <strain>Tuebingen</strain>
    </source>
</reference>
<reference key="2">
    <citation type="submission" date="2003-04" db="EMBL/GenBank/DDBJ databases">
        <authorList>
            <consortium name="NIH - Zebrafish Gene Collection (ZGC) project"/>
        </authorList>
    </citation>
    <scope>NUCLEOTIDE SEQUENCE [LARGE SCALE MRNA] (ISOFORM 1)</scope>
    <source>
        <strain>SJD</strain>
    </source>
</reference>
<gene>
    <name type="primary">rnf181</name>
    <name evidence="4" type="ORF">si:ch211-102c2.10</name>
    <name evidence="5" type="ORF">zgc:56424</name>
</gene>